<name>ADH1_DROMN</name>
<gene>
    <name type="primary">Adh1</name>
</gene>
<comment type="catalytic activity">
    <reaction evidence="2">
        <text>a primary alcohol + NAD(+) = an aldehyde + NADH + H(+)</text>
        <dbReference type="Rhea" id="RHEA:10736"/>
        <dbReference type="ChEBI" id="CHEBI:15378"/>
        <dbReference type="ChEBI" id="CHEBI:15734"/>
        <dbReference type="ChEBI" id="CHEBI:17478"/>
        <dbReference type="ChEBI" id="CHEBI:57540"/>
        <dbReference type="ChEBI" id="CHEBI:57945"/>
        <dbReference type="EC" id="1.1.1.1"/>
    </reaction>
</comment>
<comment type="catalytic activity">
    <reaction evidence="2">
        <text>a secondary alcohol + NAD(+) = a ketone + NADH + H(+)</text>
        <dbReference type="Rhea" id="RHEA:10740"/>
        <dbReference type="ChEBI" id="CHEBI:15378"/>
        <dbReference type="ChEBI" id="CHEBI:17087"/>
        <dbReference type="ChEBI" id="CHEBI:35681"/>
        <dbReference type="ChEBI" id="CHEBI:57540"/>
        <dbReference type="ChEBI" id="CHEBI:57945"/>
        <dbReference type="EC" id="1.1.1.1"/>
    </reaction>
</comment>
<comment type="subunit">
    <text>Homodimer.</text>
</comment>
<comment type="similarity">
    <text evidence="3">Belongs to the short-chain dehydrogenases/reductases (SDR) family.</text>
</comment>
<sequence length="254" mass="27548">MAIANKNIIFVAGLGGIGLDTSREIVKSGPKNLVILDRIDNPTAIAELKAINPKVTVTFYPYDVTVPVAETIKLLKTIFAQLKTVDLLINGAGILDDHQIERTIAVNFTGTVNTTTAIMEFWDKRKGGPGGVVANICSVTGFNAIYQVPVYSASKAAALSFTNSLARLAPITGVTAYSINPGITRTPLVHKFNSWLDVEPRVGELLLEHPTQTTLECAQNFVKAIEANKNGAIWQLDLGQLIAVEWTKHWDSHI</sequence>
<accession>P48586</accession>
<organism>
    <name type="scientific">Drosophila montana</name>
    <name type="common">Fruit fly</name>
    <dbReference type="NCBI Taxonomy" id="40370"/>
    <lineage>
        <taxon>Eukaryota</taxon>
        <taxon>Metazoa</taxon>
        <taxon>Ecdysozoa</taxon>
        <taxon>Arthropoda</taxon>
        <taxon>Hexapoda</taxon>
        <taxon>Insecta</taxon>
        <taxon>Pterygota</taxon>
        <taxon>Neoptera</taxon>
        <taxon>Endopterygota</taxon>
        <taxon>Diptera</taxon>
        <taxon>Brachycera</taxon>
        <taxon>Muscomorpha</taxon>
        <taxon>Ephydroidea</taxon>
        <taxon>Drosophilidae</taxon>
        <taxon>Drosophila</taxon>
    </lineage>
</organism>
<evidence type="ECO:0000250" key="1"/>
<evidence type="ECO:0000255" key="2">
    <source>
        <dbReference type="PROSITE-ProRule" id="PRU10001"/>
    </source>
</evidence>
<evidence type="ECO:0000305" key="3"/>
<proteinExistence type="inferred from homology"/>
<reference key="1">
    <citation type="journal article" date="1996" name="Mol. Biol. Evol.">
        <title>Molecular phylogeny and genome evolution in the Drosophila virilis species group: duplications of the alcohol dehydrogenase gene.</title>
        <authorList>
            <person name="Nurminsky D.I."/>
            <person name="Moriyama E.N."/>
            <person name="Lozovskaya E.R."/>
            <person name="Hartl D.L."/>
        </authorList>
    </citation>
    <scope>NUCLEOTIDE SEQUENCE [GENOMIC DNA]</scope>
</reference>
<protein>
    <recommendedName>
        <fullName>Alcohol dehydrogenase 1</fullName>
        <ecNumber>1.1.1.1</ecNumber>
    </recommendedName>
</protein>
<dbReference type="EC" id="1.1.1.1"/>
<dbReference type="EMBL" id="U26842">
    <property type="protein sequence ID" value="AAB02628.1"/>
    <property type="molecule type" value="Genomic_DNA"/>
</dbReference>
<dbReference type="SMR" id="P48586"/>
<dbReference type="GO" id="GO:0005737">
    <property type="term" value="C:cytoplasm"/>
    <property type="evidence" value="ECO:0007669"/>
    <property type="project" value="TreeGrafter"/>
</dbReference>
<dbReference type="GO" id="GO:0004022">
    <property type="term" value="F:alcohol dehydrogenase (NAD+) activity"/>
    <property type="evidence" value="ECO:0007669"/>
    <property type="project" value="UniProtKB-EC"/>
</dbReference>
<dbReference type="GO" id="GO:0006066">
    <property type="term" value="P:alcohol metabolic process"/>
    <property type="evidence" value="ECO:0007669"/>
    <property type="project" value="InterPro"/>
</dbReference>
<dbReference type="CDD" id="cd05323">
    <property type="entry name" value="ADH_SDR_c_like"/>
    <property type="match status" value="1"/>
</dbReference>
<dbReference type="FunFam" id="3.40.50.720:FF:000302">
    <property type="entry name" value="Alcohol dehydrogenase"/>
    <property type="match status" value="1"/>
</dbReference>
<dbReference type="Gene3D" id="3.40.50.720">
    <property type="entry name" value="NAD(P)-binding Rossmann-like Domain"/>
    <property type="match status" value="1"/>
</dbReference>
<dbReference type="InterPro" id="IPR002425">
    <property type="entry name" value="ADH_Drosophila-type"/>
</dbReference>
<dbReference type="InterPro" id="IPR036291">
    <property type="entry name" value="NAD(P)-bd_dom_sf"/>
</dbReference>
<dbReference type="InterPro" id="IPR020904">
    <property type="entry name" value="Sc_DH/Rdtase_CS"/>
</dbReference>
<dbReference type="InterPro" id="IPR002347">
    <property type="entry name" value="SDR_fam"/>
</dbReference>
<dbReference type="PANTHER" id="PTHR44229">
    <property type="entry name" value="15-HYDROXYPROSTAGLANDIN DEHYDROGENASE [NAD(+)]"/>
    <property type="match status" value="1"/>
</dbReference>
<dbReference type="PANTHER" id="PTHR44229:SF8">
    <property type="entry name" value="ALCOHOL DEHYDROGENASE-RELATED"/>
    <property type="match status" value="1"/>
</dbReference>
<dbReference type="Pfam" id="PF00106">
    <property type="entry name" value="adh_short"/>
    <property type="match status" value="1"/>
</dbReference>
<dbReference type="PRINTS" id="PR01168">
    <property type="entry name" value="ALCDHDRGNASE"/>
</dbReference>
<dbReference type="PRINTS" id="PR01167">
    <property type="entry name" value="INSADHFAMILY"/>
</dbReference>
<dbReference type="PRINTS" id="PR00080">
    <property type="entry name" value="SDRFAMILY"/>
</dbReference>
<dbReference type="SUPFAM" id="SSF51735">
    <property type="entry name" value="NAD(P)-binding Rossmann-fold domains"/>
    <property type="match status" value="1"/>
</dbReference>
<dbReference type="PROSITE" id="PS00061">
    <property type="entry name" value="ADH_SHORT"/>
    <property type="match status" value="1"/>
</dbReference>
<keyword id="KW-0520">NAD</keyword>
<keyword id="KW-0560">Oxidoreductase</keyword>
<feature type="initiator methionine" description="Removed" evidence="1">
    <location>
        <position position="1"/>
    </location>
</feature>
<feature type="chain" id="PRO_0000054476" description="Alcohol dehydrogenase 1">
    <location>
        <begin position="2"/>
        <end position="254"/>
    </location>
</feature>
<feature type="active site" description="Proton acceptor" evidence="2">
    <location>
        <position position="151"/>
    </location>
</feature>
<feature type="binding site" evidence="1">
    <location>
        <begin position="10"/>
        <end position="33"/>
    </location>
    <ligand>
        <name>NAD(+)</name>
        <dbReference type="ChEBI" id="CHEBI:57540"/>
    </ligand>
</feature>
<feature type="binding site" evidence="1">
    <location>
        <position position="138"/>
    </location>
    <ligand>
        <name>substrate</name>
    </ligand>
</feature>